<dbReference type="EMBL" id="CH408052">
    <property type="protein sequence ID" value="EDV08938.1"/>
    <property type="molecule type" value="Genomic_DNA"/>
</dbReference>
<dbReference type="SMR" id="B3LRM5"/>
<dbReference type="HOGENOM" id="CLU_351656_0_0_1"/>
<dbReference type="OrthoDB" id="41300at4893"/>
<dbReference type="Proteomes" id="UP000008335">
    <property type="component" value="Unassembled WGS sequence"/>
</dbReference>
<dbReference type="GO" id="GO:0005634">
    <property type="term" value="C:nucleus"/>
    <property type="evidence" value="ECO:0007669"/>
    <property type="project" value="UniProtKB-SubCell"/>
</dbReference>
<dbReference type="GO" id="GO:0009889">
    <property type="term" value="P:regulation of biosynthetic process"/>
    <property type="evidence" value="ECO:0007669"/>
    <property type="project" value="UniProtKB-ARBA"/>
</dbReference>
<dbReference type="InterPro" id="IPR006594">
    <property type="entry name" value="LisH"/>
</dbReference>
<dbReference type="PANTHER" id="PTHR45093:SF2">
    <property type="entry name" value="LISH DOMAIN-CONTAINING PROTEIN"/>
    <property type="match status" value="1"/>
</dbReference>
<dbReference type="PANTHER" id="PTHR45093">
    <property type="entry name" value="TRANSCRIPTION ACTIVATOR MSS11"/>
    <property type="match status" value="1"/>
</dbReference>
<dbReference type="SMART" id="SM00667">
    <property type="entry name" value="LisH"/>
    <property type="match status" value="1"/>
</dbReference>
<dbReference type="PROSITE" id="PS50896">
    <property type="entry name" value="LISH"/>
    <property type="match status" value="1"/>
</dbReference>
<proteinExistence type="inferred from homology"/>
<gene>
    <name type="primary">FLO8</name>
    <name type="synonym">PDH5</name>
    <name type="ORF">SCRG_04585</name>
</gene>
<protein>
    <recommendedName>
        <fullName>Transcriptional activator FLO8</fullName>
    </recommendedName>
    <alternativeName>
        <fullName>Protein PDH5</fullName>
    </alternativeName>
</protein>
<comment type="function">
    <text evidence="1">Required for diploid filamentous growth, haploid invasive growth and flocculation. Putative transcriptional activator of FLO1 (By similarity).</text>
</comment>
<comment type="subcellular location">
    <subcellularLocation>
        <location evidence="1">Nucleus</location>
    </subcellularLocation>
</comment>
<comment type="similarity">
    <text evidence="4">Belongs to the FLO8 family.</text>
</comment>
<organism>
    <name type="scientific">Saccharomyces cerevisiae (strain RM11-1a)</name>
    <name type="common">Baker's yeast</name>
    <dbReference type="NCBI Taxonomy" id="285006"/>
    <lineage>
        <taxon>Eukaryota</taxon>
        <taxon>Fungi</taxon>
        <taxon>Dikarya</taxon>
        <taxon>Ascomycota</taxon>
        <taxon>Saccharomycotina</taxon>
        <taxon>Saccharomycetes</taxon>
        <taxon>Saccharomycetales</taxon>
        <taxon>Saccharomycetaceae</taxon>
        <taxon>Saccharomyces</taxon>
    </lineage>
</organism>
<keyword id="KW-0010">Activator</keyword>
<keyword id="KW-0539">Nucleus</keyword>
<keyword id="KW-0804">Transcription</keyword>
<keyword id="KW-0805">Transcription regulation</keyword>
<sequence length="799" mass="86788">MSYKVNSSYPDSIPPTEQPYMASQYKQDLQSNIAMATNSEQQRQQQQQQQQQQQQWINQPTAENSDLKEKMNCKNTLNEYIFDFLTKSSLKNTAAAFAQDAHLDRDKGQNPVDGPKSKENNGNQNTFSKVVDTPQGFLYEWWQIFWDIFNTSSSRGGSEFAQQYYQLVLQEQRQEQIYRSLAVHAARLQHDAERRGEYSNEDIDPMHLAAMMLGNPMAPAVQMRNVNMNPIPIPMVGNPIVNNFSIPPYNNANPTTGATAVAPTAPPSGDFTNVGPTQNRSQNVTGWPVYNYPMQPTTENPVGNPCNNNTTNNTTNNKSPVNQPKSLKTMHSTDKPNNVPTSKSTRSRSATSKAKGKVKAGLVAKRRRKNNTATVSAGSTNAGSPNITTPGSTTSEPAMVGSRVNKTPRSDIATNFRNQAIIFGEEDIYSNSKSSPSLDGASPSALASKQPTKVRKNTKKASTSAFPVESTNKLGGNSVVTGKKRSPPNTRVSRRKSTPSVILNADATKDENNMLRTFSNTIAPNIHSAPPTKTANSLPFPGINLGSFNKPAVSSPLSSVTESCFDPESGKIAGKNGPKRAVNSKVSASSPLSIATPRSGDAQKQRSSKVPGNVVIKPPHGFSTTNLNITLKNSKIITSQNNTVSQELPNGGNILEAQVGNDSRSSKGNRNTLSTPEEKKPSSNNQGYDFDALKNSSSLLFPNQAYASNNRTPNENSNVADETSASTNSGDNDNTLIQPSSNVGTTLGPQQTSTNENQNVHSQNLKFGNIGMVEDQGPDYDLNLLDTNENDFNFINWEG</sequence>
<feature type="chain" id="PRO_0000392094" description="Transcriptional activator FLO8">
    <location>
        <begin position="1"/>
        <end position="799"/>
    </location>
</feature>
<feature type="domain" description="LisH" evidence="2">
    <location>
        <begin position="73"/>
        <end position="105"/>
    </location>
</feature>
<feature type="region of interest" description="Disordered" evidence="3">
    <location>
        <begin position="1"/>
        <end position="22"/>
    </location>
</feature>
<feature type="region of interest" description="Disordered" evidence="3">
    <location>
        <begin position="37"/>
        <end position="68"/>
    </location>
</feature>
<feature type="region of interest" description="Disordered" evidence="3">
    <location>
        <begin position="101"/>
        <end position="127"/>
    </location>
</feature>
<feature type="region of interest" description="Disordered" evidence="3">
    <location>
        <begin position="255"/>
        <end position="406"/>
    </location>
</feature>
<feature type="region of interest" description="Disordered" evidence="3">
    <location>
        <begin position="431"/>
        <end position="501"/>
    </location>
</feature>
<feature type="region of interest" description="Disordered" evidence="3">
    <location>
        <begin position="568"/>
        <end position="621"/>
    </location>
</feature>
<feature type="region of interest" description="Disordered" evidence="3">
    <location>
        <begin position="644"/>
        <end position="691"/>
    </location>
</feature>
<feature type="region of interest" description="Disordered" evidence="3">
    <location>
        <begin position="705"/>
        <end position="758"/>
    </location>
</feature>
<feature type="compositionally biased region" description="Polar residues" evidence="3">
    <location>
        <begin position="1"/>
        <end position="10"/>
    </location>
</feature>
<feature type="compositionally biased region" description="Low complexity" evidence="3">
    <location>
        <begin position="41"/>
        <end position="55"/>
    </location>
</feature>
<feature type="compositionally biased region" description="Polar residues" evidence="3">
    <location>
        <begin position="270"/>
        <end position="285"/>
    </location>
</feature>
<feature type="compositionally biased region" description="Low complexity" evidence="3">
    <location>
        <begin position="307"/>
        <end position="317"/>
    </location>
</feature>
<feature type="compositionally biased region" description="Polar residues" evidence="3">
    <location>
        <begin position="318"/>
        <end position="340"/>
    </location>
</feature>
<feature type="compositionally biased region" description="Low complexity" evidence="3">
    <location>
        <begin position="341"/>
        <end position="353"/>
    </location>
</feature>
<feature type="compositionally biased region" description="Basic residues" evidence="3">
    <location>
        <begin position="354"/>
        <end position="370"/>
    </location>
</feature>
<feature type="compositionally biased region" description="Polar residues" evidence="3">
    <location>
        <begin position="371"/>
        <end position="396"/>
    </location>
</feature>
<feature type="compositionally biased region" description="Polar residues" evidence="3">
    <location>
        <begin position="460"/>
        <end position="480"/>
    </location>
</feature>
<feature type="compositionally biased region" description="Basic residues" evidence="3">
    <location>
        <begin position="482"/>
        <end position="497"/>
    </location>
</feature>
<feature type="compositionally biased region" description="Polar residues" evidence="3">
    <location>
        <begin position="584"/>
        <end position="593"/>
    </location>
</feature>
<feature type="compositionally biased region" description="Polar residues" evidence="3">
    <location>
        <begin position="660"/>
        <end position="675"/>
    </location>
</feature>
<accession>B3LRM5</accession>
<evidence type="ECO:0000250" key="1"/>
<evidence type="ECO:0000255" key="2">
    <source>
        <dbReference type="PROSITE-ProRule" id="PRU00126"/>
    </source>
</evidence>
<evidence type="ECO:0000256" key="3">
    <source>
        <dbReference type="SAM" id="MobiDB-lite"/>
    </source>
</evidence>
<evidence type="ECO:0000305" key="4"/>
<name>FLO8_YEAS1</name>
<reference key="1">
    <citation type="submission" date="2005-03" db="EMBL/GenBank/DDBJ databases">
        <title>Annotation of the Saccharomyces cerevisiae RM11-1a genome.</title>
        <authorList>
            <consortium name="The Broad Institute Genome Sequencing Platform"/>
            <person name="Birren B.W."/>
            <person name="Lander E.S."/>
            <person name="Galagan J.E."/>
            <person name="Nusbaum C."/>
            <person name="Devon K."/>
            <person name="Cuomo C."/>
            <person name="Jaffe D.B."/>
            <person name="Butler J."/>
            <person name="Alvarez P."/>
            <person name="Gnerre S."/>
            <person name="Grabherr M."/>
            <person name="Kleber M."/>
            <person name="Mauceli E.W."/>
            <person name="Brockman W."/>
            <person name="MacCallum I.A."/>
            <person name="Rounsley S."/>
            <person name="Young S.K."/>
            <person name="LaButti K."/>
            <person name="Pushparaj V."/>
            <person name="DeCaprio D."/>
            <person name="Crawford M."/>
            <person name="Koehrsen M."/>
            <person name="Engels R."/>
            <person name="Montgomery P."/>
            <person name="Pearson M."/>
            <person name="Howarth C."/>
            <person name="Larson L."/>
            <person name="Luoma S."/>
            <person name="White J."/>
            <person name="O'Leary S."/>
            <person name="Kodira C.D."/>
            <person name="Zeng Q."/>
            <person name="Yandava C."/>
            <person name="Alvarado L."/>
            <person name="Pratt S."/>
            <person name="Kruglyak L."/>
        </authorList>
    </citation>
    <scope>NUCLEOTIDE SEQUENCE [LARGE SCALE GENOMIC DNA]</scope>
    <source>
        <strain>RM11-1a</strain>
    </source>
</reference>